<evidence type="ECO:0000255" key="1">
    <source>
        <dbReference type="HAMAP-Rule" id="MF_00024"/>
    </source>
</evidence>
<protein>
    <recommendedName>
        <fullName evidence="1">Cobalamin biosynthesis protein CobD</fullName>
    </recommendedName>
</protein>
<gene>
    <name evidence="1" type="primary">cobD</name>
    <name type="ordered locus">BMEI0707</name>
</gene>
<reference key="1">
    <citation type="journal article" date="2002" name="Proc. Natl. Acad. Sci. U.S.A.">
        <title>The genome sequence of the facultative intracellular pathogen Brucella melitensis.</title>
        <authorList>
            <person name="DelVecchio V.G."/>
            <person name="Kapatral V."/>
            <person name="Redkar R.J."/>
            <person name="Patra G."/>
            <person name="Mujer C."/>
            <person name="Los T."/>
            <person name="Ivanova N."/>
            <person name="Anderson I."/>
            <person name="Bhattacharyya A."/>
            <person name="Lykidis A."/>
            <person name="Reznik G."/>
            <person name="Jablonski L."/>
            <person name="Larsen N."/>
            <person name="D'Souza M."/>
            <person name="Bernal A."/>
            <person name="Mazur M."/>
            <person name="Goltsman E."/>
            <person name="Selkov E."/>
            <person name="Elzer P.H."/>
            <person name="Hagius S."/>
            <person name="O'Callaghan D."/>
            <person name="Letesson J.-J."/>
            <person name="Haselkorn R."/>
            <person name="Kyrpides N.C."/>
            <person name="Overbeek R."/>
        </authorList>
    </citation>
    <scope>NUCLEOTIDE SEQUENCE [LARGE SCALE GENOMIC DNA]</scope>
    <source>
        <strain>ATCC 23456 / CCUG 17765 / NCTC 10094 / 16M</strain>
    </source>
</reference>
<name>COBD_BRUME</name>
<keyword id="KW-1003">Cell membrane</keyword>
<keyword id="KW-0169">Cobalamin biosynthesis</keyword>
<keyword id="KW-0472">Membrane</keyword>
<keyword id="KW-0812">Transmembrane</keyword>
<keyword id="KW-1133">Transmembrane helix</keyword>
<comment type="function">
    <text evidence="1">Converts cobyric acid to cobinamide by the addition of aminopropanol on the F carboxylic group.</text>
</comment>
<comment type="pathway">
    <text evidence="1">Cofactor biosynthesis; adenosylcobalamin biosynthesis.</text>
</comment>
<comment type="subcellular location">
    <subcellularLocation>
        <location evidence="1">Cell membrane</location>
        <topology evidence="1">Multi-pass membrane protein</topology>
    </subcellularLocation>
</comment>
<comment type="similarity">
    <text evidence="1">Belongs to the CobD/CbiB family.</text>
</comment>
<accession>Q8YHT9</accession>
<proteinExistence type="inferred from homology"/>
<dbReference type="EMBL" id="AE008917">
    <property type="protein sequence ID" value="AAL51888.1"/>
    <property type="molecule type" value="Genomic_DNA"/>
</dbReference>
<dbReference type="PIR" id="AE3340">
    <property type="entry name" value="AE3340"/>
</dbReference>
<dbReference type="GeneID" id="29593514"/>
<dbReference type="KEGG" id="bme:BMEI0707"/>
<dbReference type="KEGG" id="bmel:DK63_719"/>
<dbReference type="PATRIC" id="fig|224914.52.peg.753"/>
<dbReference type="eggNOG" id="COG1270">
    <property type="taxonomic scope" value="Bacteria"/>
</dbReference>
<dbReference type="PhylomeDB" id="Q8YHT9"/>
<dbReference type="UniPathway" id="UPA00148"/>
<dbReference type="Proteomes" id="UP000000419">
    <property type="component" value="Chromosome I"/>
</dbReference>
<dbReference type="GO" id="GO:0005886">
    <property type="term" value="C:plasma membrane"/>
    <property type="evidence" value="ECO:0007669"/>
    <property type="project" value="UniProtKB-SubCell"/>
</dbReference>
<dbReference type="GO" id="GO:0015420">
    <property type="term" value="F:ABC-type vitamin B12 transporter activity"/>
    <property type="evidence" value="ECO:0007669"/>
    <property type="project" value="UniProtKB-UniRule"/>
</dbReference>
<dbReference type="GO" id="GO:0048472">
    <property type="term" value="F:threonine-phosphate decarboxylase activity"/>
    <property type="evidence" value="ECO:0007669"/>
    <property type="project" value="InterPro"/>
</dbReference>
<dbReference type="GO" id="GO:0009236">
    <property type="term" value="P:cobalamin biosynthetic process"/>
    <property type="evidence" value="ECO:0007669"/>
    <property type="project" value="UniProtKB-UniRule"/>
</dbReference>
<dbReference type="HAMAP" id="MF_00024">
    <property type="entry name" value="CobD_CbiB"/>
    <property type="match status" value="1"/>
</dbReference>
<dbReference type="InterPro" id="IPR004485">
    <property type="entry name" value="Cobalamin_biosynth_CobD/CbiB"/>
</dbReference>
<dbReference type="NCBIfam" id="TIGR00380">
    <property type="entry name" value="cobal_cbiB"/>
    <property type="match status" value="1"/>
</dbReference>
<dbReference type="PANTHER" id="PTHR34308">
    <property type="entry name" value="COBALAMIN BIOSYNTHESIS PROTEIN CBIB"/>
    <property type="match status" value="1"/>
</dbReference>
<dbReference type="PANTHER" id="PTHR34308:SF1">
    <property type="entry name" value="COBALAMIN BIOSYNTHESIS PROTEIN CBIB"/>
    <property type="match status" value="1"/>
</dbReference>
<dbReference type="Pfam" id="PF03186">
    <property type="entry name" value="CobD_Cbib"/>
    <property type="match status" value="1"/>
</dbReference>
<sequence>MEIKLIVLSLALLLDRFIGDLPLLWQRISHPVVLLGKAISWGEKNFNDSSLPPSTLRRNGMWLTVGLVAACIFAGLVIRSILPHAGTAGAIAEVVIVAILLAQKSLADHVQAVAQALRDDGIEGGRKAVSMIVGRNPDRLDEGGVSRAAIESLAENASDGIVAPAFWFLVGGLPGLFAYKFINTADSMIGHLNDRYRDFGRFAAKLDDVANYIPARLTGLLAALATSLGHGREAGRQALSIMCRDARLHRSPNAGWPEAAFAGALGLALAGPRQYGAETVEGPMLNATGKREAEARDIDAALVLFWSTMSLMTGLVIAASLVGLFVG</sequence>
<organism>
    <name type="scientific">Brucella melitensis biotype 1 (strain ATCC 23456 / CCUG 17765 / NCTC 10094 / 16M)</name>
    <dbReference type="NCBI Taxonomy" id="224914"/>
    <lineage>
        <taxon>Bacteria</taxon>
        <taxon>Pseudomonadati</taxon>
        <taxon>Pseudomonadota</taxon>
        <taxon>Alphaproteobacteria</taxon>
        <taxon>Hyphomicrobiales</taxon>
        <taxon>Brucellaceae</taxon>
        <taxon>Brucella/Ochrobactrum group</taxon>
        <taxon>Brucella</taxon>
    </lineage>
</organism>
<feature type="chain" id="PRO_0000150922" description="Cobalamin biosynthesis protein CobD">
    <location>
        <begin position="1"/>
        <end position="327"/>
    </location>
</feature>
<feature type="transmembrane region" description="Helical" evidence="1">
    <location>
        <begin position="61"/>
        <end position="78"/>
    </location>
</feature>
<feature type="transmembrane region" description="Helical" evidence="1">
    <location>
        <begin position="80"/>
        <end position="102"/>
    </location>
</feature>
<feature type="transmembrane region" description="Helical" evidence="1">
    <location>
        <begin position="160"/>
        <end position="182"/>
    </location>
</feature>
<feature type="transmembrane region" description="Helical" evidence="1">
    <location>
        <begin position="300"/>
        <end position="322"/>
    </location>
</feature>